<reference key="1">
    <citation type="journal article" date="2001" name="Nature">
        <title>Genome sequence of enterohaemorrhagic Escherichia coli O157:H7.</title>
        <authorList>
            <person name="Perna N.T."/>
            <person name="Plunkett G. III"/>
            <person name="Burland V."/>
            <person name="Mau B."/>
            <person name="Glasner J.D."/>
            <person name="Rose D.J."/>
            <person name="Mayhew G.F."/>
            <person name="Evans P.S."/>
            <person name="Gregor J."/>
            <person name="Kirkpatrick H.A."/>
            <person name="Posfai G."/>
            <person name="Hackett J."/>
            <person name="Klink S."/>
            <person name="Boutin A."/>
            <person name="Shao Y."/>
            <person name="Miller L."/>
            <person name="Grotbeck E.J."/>
            <person name="Davis N.W."/>
            <person name="Lim A."/>
            <person name="Dimalanta E.T."/>
            <person name="Potamousis K."/>
            <person name="Apodaca J."/>
            <person name="Anantharaman T.S."/>
            <person name="Lin J."/>
            <person name="Yen G."/>
            <person name="Schwartz D.C."/>
            <person name="Welch R.A."/>
            <person name="Blattner F.R."/>
        </authorList>
    </citation>
    <scope>NUCLEOTIDE SEQUENCE [LARGE SCALE GENOMIC DNA]</scope>
    <source>
        <strain>O157:H7 / EDL933 / ATCC 700927 / EHEC</strain>
    </source>
</reference>
<reference key="2">
    <citation type="journal article" date="2001" name="DNA Res.">
        <title>Complete genome sequence of enterohemorrhagic Escherichia coli O157:H7 and genomic comparison with a laboratory strain K-12.</title>
        <authorList>
            <person name="Hayashi T."/>
            <person name="Makino K."/>
            <person name="Ohnishi M."/>
            <person name="Kurokawa K."/>
            <person name="Ishii K."/>
            <person name="Yokoyama K."/>
            <person name="Han C.-G."/>
            <person name="Ohtsubo E."/>
            <person name="Nakayama K."/>
            <person name="Murata T."/>
            <person name="Tanaka M."/>
            <person name="Tobe T."/>
            <person name="Iida T."/>
            <person name="Takami H."/>
            <person name="Honda T."/>
            <person name="Sasakawa C."/>
            <person name="Ogasawara N."/>
            <person name="Yasunaga T."/>
            <person name="Kuhara S."/>
            <person name="Shiba T."/>
            <person name="Hattori M."/>
            <person name="Shinagawa H."/>
        </authorList>
    </citation>
    <scope>NUCLEOTIDE SEQUENCE [LARGE SCALE GENOMIC DNA]</scope>
    <source>
        <strain>O157:H7 / Sakai / RIMD 0509952 / EHEC</strain>
    </source>
</reference>
<keyword id="KW-0997">Cell inner membrane</keyword>
<keyword id="KW-1003">Cell membrane</keyword>
<keyword id="KW-0201">Cytochrome c-type biogenesis</keyword>
<keyword id="KW-1015">Disulfide bond</keyword>
<keyword id="KW-0472">Membrane</keyword>
<keyword id="KW-0676">Redox-active center</keyword>
<keyword id="KW-1185">Reference proteome</keyword>
<keyword id="KW-0812">Transmembrane</keyword>
<keyword id="KW-1133">Transmembrane helix</keyword>
<accession>P0AA87</accession>
<accession>P33926</accession>
<proteinExistence type="inferred from homology"/>
<sequence>MKRKVLLIPLIIFLAIAAALLWQLARNAEGDDPTNLESALIGKPVPKFRLESLDNPGQFYQADVLTQGKPVLLNVWATWCPTCRAEHQYLNQLSAQGIRVVGMNYKDDRQKAISWLKELGNPYALSLFDGDGMLGLDLGVYGAPETFLIDGNGIIRYRHAGDLNPRVWEEEIKPLWEKYSKEAAQ</sequence>
<evidence type="ECO:0000250" key="1"/>
<evidence type="ECO:0000255" key="2"/>
<evidence type="ECO:0000255" key="3">
    <source>
        <dbReference type="PROSITE-ProRule" id="PRU00691"/>
    </source>
</evidence>
<evidence type="ECO:0000305" key="4"/>
<comment type="function">
    <text evidence="1">Involved in disulfide bond formation. Catalyzes a late, reductive step in the assembly of periplasmic c-type cytochromes, probably the reduction of disulfide bonds of the apocytochrome c to allow covalent linkage with the heme. Possible subunit of a heme lyase (By similarity).</text>
</comment>
<comment type="subcellular location">
    <subcellularLocation>
        <location evidence="1">Cell inner membrane</location>
        <topology evidence="1">Single-pass membrane protein</topology>
        <orientation evidence="1">Periplasmic side</orientation>
    </subcellularLocation>
</comment>
<comment type="similarity">
    <text evidence="4">Belongs to the thioredoxin family. DsbE subfamily.</text>
</comment>
<protein>
    <recommendedName>
        <fullName>Thiol:disulfide interchange protein DsbE</fullName>
    </recommendedName>
    <alternativeName>
        <fullName>Cytochrome c biogenesis protein CcmG</fullName>
    </alternativeName>
</protein>
<gene>
    <name type="primary">dsbE</name>
    <name type="synonym">ccmG</name>
    <name type="ordered locus">Z3452</name>
    <name type="ordered locus">ECs3084</name>
</gene>
<dbReference type="EMBL" id="AE005174">
    <property type="protein sequence ID" value="AAG57330.1"/>
    <property type="molecule type" value="Genomic_DNA"/>
</dbReference>
<dbReference type="EMBL" id="BA000007">
    <property type="protein sequence ID" value="BAB36507.1"/>
    <property type="molecule type" value="Genomic_DNA"/>
</dbReference>
<dbReference type="PIR" id="D91014">
    <property type="entry name" value="D91014"/>
</dbReference>
<dbReference type="PIR" id="F85858">
    <property type="entry name" value="F85858"/>
</dbReference>
<dbReference type="RefSeq" id="NP_311111.1">
    <property type="nucleotide sequence ID" value="NC_002695.1"/>
</dbReference>
<dbReference type="RefSeq" id="WP_000824439.1">
    <property type="nucleotide sequence ID" value="NZ_VOAI01000001.1"/>
</dbReference>
<dbReference type="BMRB" id="P0AA87"/>
<dbReference type="SMR" id="P0AA87"/>
<dbReference type="STRING" id="155864.Z3452"/>
<dbReference type="GeneID" id="916790"/>
<dbReference type="GeneID" id="93774983"/>
<dbReference type="KEGG" id="ece:Z3452"/>
<dbReference type="KEGG" id="ecs:ECs_3084"/>
<dbReference type="PATRIC" id="fig|386585.9.peg.3218"/>
<dbReference type="eggNOG" id="COG0526">
    <property type="taxonomic scope" value="Bacteria"/>
</dbReference>
<dbReference type="HOGENOM" id="CLU_042529_19_1_6"/>
<dbReference type="OMA" id="KWLAEFH"/>
<dbReference type="Proteomes" id="UP000000558">
    <property type="component" value="Chromosome"/>
</dbReference>
<dbReference type="Proteomes" id="UP000002519">
    <property type="component" value="Chromosome"/>
</dbReference>
<dbReference type="GO" id="GO:0030288">
    <property type="term" value="C:outer membrane-bounded periplasmic space"/>
    <property type="evidence" value="ECO:0007669"/>
    <property type="project" value="InterPro"/>
</dbReference>
<dbReference type="GO" id="GO:0005886">
    <property type="term" value="C:plasma membrane"/>
    <property type="evidence" value="ECO:0007669"/>
    <property type="project" value="UniProtKB-SubCell"/>
</dbReference>
<dbReference type="GO" id="GO:0015036">
    <property type="term" value="F:disulfide oxidoreductase activity"/>
    <property type="evidence" value="ECO:0007669"/>
    <property type="project" value="InterPro"/>
</dbReference>
<dbReference type="GO" id="GO:0017004">
    <property type="term" value="P:cytochrome complex assembly"/>
    <property type="evidence" value="ECO:0007669"/>
    <property type="project" value="UniProtKB-KW"/>
</dbReference>
<dbReference type="CDD" id="cd03010">
    <property type="entry name" value="TlpA_like_DsbE"/>
    <property type="match status" value="1"/>
</dbReference>
<dbReference type="FunFam" id="3.40.30.10:FF:000040">
    <property type="entry name" value="Thiol:disulfide interchange protein DsbE"/>
    <property type="match status" value="1"/>
</dbReference>
<dbReference type="Gene3D" id="3.40.30.10">
    <property type="entry name" value="Glutaredoxin"/>
    <property type="match status" value="1"/>
</dbReference>
<dbReference type="InterPro" id="IPR004799">
    <property type="entry name" value="Periplasmic_diS_OxRdtase_DsbE"/>
</dbReference>
<dbReference type="InterPro" id="IPR013740">
    <property type="entry name" value="Redoxin"/>
</dbReference>
<dbReference type="InterPro" id="IPR036249">
    <property type="entry name" value="Thioredoxin-like_sf"/>
</dbReference>
<dbReference type="InterPro" id="IPR017937">
    <property type="entry name" value="Thioredoxin_CS"/>
</dbReference>
<dbReference type="InterPro" id="IPR013766">
    <property type="entry name" value="Thioredoxin_domain"/>
</dbReference>
<dbReference type="InterPro" id="IPR050553">
    <property type="entry name" value="Thioredoxin_ResA/DsbE_sf"/>
</dbReference>
<dbReference type="NCBIfam" id="TIGR00385">
    <property type="entry name" value="dsbE"/>
    <property type="match status" value="1"/>
</dbReference>
<dbReference type="NCBIfam" id="NF011941">
    <property type="entry name" value="PRK15412.1"/>
    <property type="match status" value="1"/>
</dbReference>
<dbReference type="PANTHER" id="PTHR42852">
    <property type="entry name" value="THIOL:DISULFIDE INTERCHANGE PROTEIN DSBE"/>
    <property type="match status" value="1"/>
</dbReference>
<dbReference type="PANTHER" id="PTHR42852:SF6">
    <property type="entry name" value="THIOL:DISULFIDE INTERCHANGE PROTEIN DSBE"/>
    <property type="match status" value="1"/>
</dbReference>
<dbReference type="Pfam" id="PF08534">
    <property type="entry name" value="Redoxin"/>
    <property type="match status" value="1"/>
</dbReference>
<dbReference type="SUPFAM" id="SSF52833">
    <property type="entry name" value="Thioredoxin-like"/>
    <property type="match status" value="1"/>
</dbReference>
<dbReference type="PROSITE" id="PS00194">
    <property type="entry name" value="THIOREDOXIN_1"/>
    <property type="match status" value="1"/>
</dbReference>
<dbReference type="PROSITE" id="PS51352">
    <property type="entry name" value="THIOREDOXIN_2"/>
    <property type="match status" value="1"/>
</dbReference>
<name>DSBE_ECO57</name>
<feature type="chain" id="PRO_0000201294" description="Thiol:disulfide interchange protein DsbE">
    <location>
        <begin position="1"/>
        <end position="185"/>
    </location>
</feature>
<feature type="topological domain" description="Cytoplasmic" evidence="2">
    <location>
        <begin position="1"/>
        <end position="4"/>
    </location>
</feature>
<feature type="transmembrane region" description="Helical" evidence="2">
    <location>
        <begin position="5"/>
        <end position="25"/>
    </location>
</feature>
<feature type="topological domain" description="Periplasmic" evidence="2">
    <location>
        <begin position="26"/>
        <end position="185"/>
    </location>
</feature>
<feature type="domain" description="Thioredoxin" evidence="3">
    <location>
        <begin position="39"/>
        <end position="177"/>
    </location>
</feature>
<feature type="disulfide bond" description="Redox-active" evidence="3">
    <location>
        <begin position="80"/>
        <end position="83"/>
    </location>
</feature>
<organism>
    <name type="scientific">Escherichia coli O157:H7</name>
    <dbReference type="NCBI Taxonomy" id="83334"/>
    <lineage>
        <taxon>Bacteria</taxon>
        <taxon>Pseudomonadati</taxon>
        <taxon>Pseudomonadota</taxon>
        <taxon>Gammaproteobacteria</taxon>
        <taxon>Enterobacterales</taxon>
        <taxon>Enterobacteriaceae</taxon>
        <taxon>Escherichia</taxon>
    </lineage>
</organism>